<organism>
    <name type="scientific">Emericella nidulans (strain FGSC A4 / ATCC 38163 / CBS 112.46 / NRRL 194 / M139)</name>
    <name type="common">Aspergillus nidulans</name>
    <dbReference type="NCBI Taxonomy" id="227321"/>
    <lineage>
        <taxon>Eukaryota</taxon>
        <taxon>Fungi</taxon>
        <taxon>Dikarya</taxon>
        <taxon>Ascomycota</taxon>
        <taxon>Pezizomycotina</taxon>
        <taxon>Eurotiomycetes</taxon>
        <taxon>Eurotiomycetidae</taxon>
        <taxon>Eurotiales</taxon>
        <taxon>Aspergillaceae</taxon>
        <taxon>Aspergillus</taxon>
        <taxon>Aspergillus subgen. Nidulantes</taxon>
    </lineage>
</organism>
<evidence type="ECO:0000255" key="1">
    <source>
        <dbReference type="PROSITE-ProRule" id="PRU01020"/>
    </source>
</evidence>
<evidence type="ECO:0000269" key="2">
    <source>
    </source>
</evidence>
<evidence type="ECO:0000303" key="3">
    <source>
    </source>
</evidence>
<evidence type="ECO:0000305" key="4"/>
<evidence type="ECO:0000305" key="5">
    <source>
    </source>
</evidence>
<name>ASQN_EMENI</name>
<dbReference type="EC" id="2.1.1.-" evidence="1"/>
<dbReference type="EMBL" id="BN001306">
    <property type="protein sequence ID" value="CBF82288.1"/>
    <property type="molecule type" value="Genomic_DNA"/>
</dbReference>
<dbReference type="EMBL" id="AACD01000170">
    <property type="protein sequence ID" value="EAA61514.1"/>
    <property type="molecule type" value="Genomic_DNA"/>
</dbReference>
<dbReference type="RefSeq" id="XP_682492.1">
    <property type="nucleotide sequence ID" value="XM_677400.1"/>
</dbReference>
<dbReference type="SMR" id="Q5AR57"/>
<dbReference type="EnsemblFungi" id="CBF82288">
    <property type="protein sequence ID" value="CBF82288"/>
    <property type="gene ID" value="ANIA_09223"/>
</dbReference>
<dbReference type="KEGG" id="ani:ANIA_09223"/>
<dbReference type="VEuPathDB" id="FungiDB:AN9223"/>
<dbReference type="eggNOG" id="KOG3178">
    <property type="taxonomic scope" value="Eukaryota"/>
</dbReference>
<dbReference type="HOGENOM" id="CLU_005533_1_2_1"/>
<dbReference type="InParanoid" id="Q5AR57"/>
<dbReference type="OMA" id="DIDMMCL"/>
<dbReference type="OrthoDB" id="2410195at2759"/>
<dbReference type="Proteomes" id="UP000000560">
    <property type="component" value="Chromosome VI"/>
</dbReference>
<dbReference type="GO" id="GO:0008171">
    <property type="term" value="F:O-methyltransferase activity"/>
    <property type="evidence" value="ECO:0007669"/>
    <property type="project" value="InterPro"/>
</dbReference>
<dbReference type="GO" id="GO:0032259">
    <property type="term" value="P:methylation"/>
    <property type="evidence" value="ECO:0007669"/>
    <property type="project" value="UniProtKB-KW"/>
</dbReference>
<dbReference type="GO" id="GO:0044550">
    <property type="term" value="P:secondary metabolite biosynthetic process"/>
    <property type="evidence" value="ECO:0007669"/>
    <property type="project" value="UniProtKB-ARBA"/>
</dbReference>
<dbReference type="Gene3D" id="3.40.50.150">
    <property type="entry name" value="Vaccinia Virus protein VP39"/>
    <property type="match status" value="1"/>
</dbReference>
<dbReference type="InterPro" id="IPR016461">
    <property type="entry name" value="COMT-like"/>
</dbReference>
<dbReference type="InterPro" id="IPR001077">
    <property type="entry name" value="O_MeTrfase_dom"/>
</dbReference>
<dbReference type="InterPro" id="IPR029063">
    <property type="entry name" value="SAM-dependent_MTases_sf"/>
</dbReference>
<dbReference type="PANTHER" id="PTHR43712:SF5">
    <property type="entry name" value="O-METHYLTRANSFERASE ASQN-RELATED"/>
    <property type="match status" value="1"/>
</dbReference>
<dbReference type="PANTHER" id="PTHR43712">
    <property type="entry name" value="PUTATIVE (AFU_ORTHOLOGUE AFUA_4G14580)-RELATED"/>
    <property type="match status" value="1"/>
</dbReference>
<dbReference type="Pfam" id="PF00891">
    <property type="entry name" value="Methyltransf_2"/>
    <property type="match status" value="1"/>
</dbReference>
<dbReference type="SUPFAM" id="SSF53335">
    <property type="entry name" value="S-adenosyl-L-methionine-dependent methyltransferases"/>
    <property type="match status" value="1"/>
</dbReference>
<dbReference type="PROSITE" id="PS51683">
    <property type="entry name" value="SAM_OMT_II"/>
    <property type="match status" value="1"/>
</dbReference>
<keyword id="KW-0489">Methyltransferase</keyword>
<keyword id="KW-1185">Reference proteome</keyword>
<keyword id="KW-0949">S-adenosyl-L-methionine</keyword>
<keyword id="KW-0808">Transferase</keyword>
<reference key="1">
    <citation type="journal article" date="2005" name="Nature">
        <title>Sequencing of Aspergillus nidulans and comparative analysis with A. fumigatus and A. oryzae.</title>
        <authorList>
            <person name="Galagan J.E."/>
            <person name="Calvo S.E."/>
            <person name="Cuomo C."/>
            <person name="Ma L.-J."/>
            <person name="Wortman J.R."/>
            <person name="Batzoglou S."/>
            <person name="Lee S.-I."/>
            <person name="Bastuerkmen M."/>
            <person name="Spevak C.C."/>
            <person name="Clutterbuck J."/>
            <person name="Kapitonov V."/>
            <person name="Jurka J."/>
            <person name="Scazzocchio C."/>
            <person name="Farman M.L."/>
            <person name="Butler J."/>
            <person name="Purcell S."/>
            <person name="Harris S."/>
            <person name="Braus G.H."/>
            <person name="Draht O."/>
            <person name="Busch S."/>
            <person name="D'Enfert C."/>
            <person name="Bouchier C."/>
            <person name="Goldman G.H."/>
            <person name="Bell-Pedersen D."/>
            <person name="Griffiths-Jones S."/>
            <person name="Doonan J.H."/>
            <person name="Yu J."/>
            <person name="Vienken K."/>
            <person name="Pain A."/>
            <person name="Freitag M."/>
            <person name="Selker E.U."/>
            <person name="Archer D.B."/>
            <person name="Penalva M.A."/>
            <person name="Oakley B.R."/>
            <person name="Momany M."/>
            <person name="Tanaka T."/>
            <person name="Kumagai T."/>
            <person name="Asai K."/>
            <person name="Machida M."/>
            <person name="Nierman W.C."/>
            <person name="Denning D.W."/>
            <person name="Caddick M.X."/>
            <person name="Hynes M."/>
            <person name="Paoletti M."/>
            <person name="Fischer R."/>
            <person name="Miller B.L."/>
            <person name="Dyer P.S."/>
            <person name="Sachs M.S."/>
            <person name="Osmani S.A."/>
            <person name="Birren B.W."/>
        </authorList>
    </citation>
    <scope>NUCLEOTIDE SEQUENCE [LARGE SCALE GENOMIC DNA]</scope>
    <source>
        <strain>FGSC A4 / ATCC 38163 / CBS 112.46 / NRRL 194 / M139</strain>
    </source>
</reference>
<reference key="2">
    <citation type="journal article" date="2009" name="Fungal Genet. Biol.">
        <title>The 2008 update of the Aspergillus nidulans genome annotation: a community effort.</title>
        <authorList>
            <person name="Wortman J.R."/>
            <person name="Gilsenan J.M."/>
            <person name="Joardar V."/>
            <person name="Deegan J."/>
            <person name="Clutterbuck J."/>
            <person name="Andersen M.R."/>
            <person name="Archer D."/>
            <person name="Bencina M."/>
            <person name="Braus G."/>
            <person name="Coutinho P."/>
            <person name="von Dohren H."/>
            <person name="Doonan J."/>
            <person name="Driessen A.J."/>
            <person name="Durek P."/>
            <person name="Espeso E."/>
            <person name="Fekete E."/>
            <person name="Flipphi M."/>
            <person name="Estrada C.G."/>
            <person name="Geysens S."/>
            <person name="Goldman G."/>
            <person name="de Groot P.W."/>
            <person name="Hansen K."/>
            <person name="Harris S.D."/>
            <person name="Heinekamp T."/>
            <person name="Helmstaedt K."/>
            <person name="Henrissat B."/>
            <person name="Hofmann G."/>
            <person name="Homan T."/>
            <person name="Horio T."/>
            <person name="Horiuchi H."/>
            <person name="James S."/>
            <person name="Jones M."/>
            <person name="Karaffa L."/>
            <person name="Karanyi Z."/>
            <person name="Kato M."/>
            <person name="Keller N."/>
            <person name="Kelly D.E."/>
            <person name="Kiel J.A."/>
            <person name="Kim J.M."/>
            <person name="van der Klei I.J."/>
            <person name="Klis F.M."/>
            <person name="Kovalchuk A."/>
            <person name="Krasevec N."/>
            <person name="Kubicek C.P."/>
            <person name="Liu B."/>
            <person name="Maccabe A."/>
            <person name="Meyer V."/>
            <person name="Mirabito P."/>
            <person name="Miskei M."/>
            <person name="Mos M."/>
            <person name="Mullins J."/>
            <person name="Nelson D.R."/>
            <person name="Nielsen J."/>
            <person name="Oakley B.R."/>
            <person name="Osmani S.A."/>
            <person name="Pakula T."/>
            <person name="Paszewski A."/>
            <person name="Paulsen I."/>
            <person name="Pilsyk S."/>
            <person name="Pocsi I."/>
            <person name="Punt P.J."/>
            <person name="Ram A.F."/>
            <person name="Ren Q."/>
            <person name="Robellet X."/>
            <person name="Robson G."/>
            <person name="Seiboth B."/>
            <person name="van Solingen P."/>
            <person name="Specht T."/>
            <person name="Sun J."/>
            <person name="Taheri-Talesh N."/>
            <person name="Takeshita N."/>
            <person name="Ussery D."/>
            <person name="vanKuyk P.A."/>
            <person name="Visser H."/>
            <person name="van de Vondervoort P.J."/>
            <person name="de Vries R.P."/>
            <person name="Walton J."/>
            <person name="Xiang X."/>
            <person name="Xiong Y."/>
            <person name="Zeng A.P."/>
            <person name="Brandt B.W."/>
            <person name="Cornell M.J."/>
            <person name="van den Hondel C.A."/>
            <person name="Visser J."/>
            <person name="Oliver S.G."/>
            <person name="Turner G."/>
        </authorList>
    </citation>
    <scope>GENOME REANNOTATION</scope>
    <source>
        <strain>FGSC A4 / ATCC 38163 / CBS 112.46 / NRRL 194 / M139</strain>
    </source>
</reference>
<reference key="3">
    <citation type="journal article" date="2014" name="Angew. Chem. Int. Ed.">
        <title>Non-heme dioxygenase catalyzes atypical oxidations of 6,7-bicyclic systems to form the 6,6-quinolone core of viridicatin-type fungal alkaloids.</title>
        <authorList>
            <person name="Ishikawa N."/>
            <person name="Tanaka H."/>
            <person name="Koyama F."/>
            <person name="Noguchi H."/>
            <person name="Wang C.C."/>
            <person name="Hotta K."/>
            <person name="Watanabe K."/>
        </authorList>
    </citation>
    <scope>FUNCTION</scope>
    <scope>PATHWAY</scope>
</reference>
<accession>Q5AR57</accession>
<accession>C8VJQ8</accession>
<comment type="function">
    <text evidence="2 4">O-methyltransferase; part of the gene cluster that mediates the biosynthesis of the aspoquinolone mycotoxins (PubMed:25251934). The role of asqN within the aspoquinolone pathway has still to be determined (Probable). The first step of the pathway is catalyzed by the nonribosomal peptide synthetase asqK that condenses anthranilic acid and O-methyl-L-tyrosine to produce 4'-methoxycyclopeptin. 4'-methoxycyclopeptin is then converted to 4'-methoxydehydrocyclopeptin by the ketoglutarate-dependent dioxygenase asqJ. AsqJ also converts its first product 4'-methoxydehydrocyclopeptin to 4'-methoxycyclopenin. The following conversion of 4'-methoxycyclopenin into 4'-methoxyviridicatin is catalyzed by the cyclopenase asqI. 4'-methoxyviridicatin is the precursor of quinolone natural products, and is further converted to quinolinone B. The prenyltransferase asqH1 then catalyzes the canonical Friedel-Crafts alkylation of quinolinone B with dimethylallyl cation to yield dimethylallyl quinolone, which is subjected to FAD-dependent dehydrogenation by the FAD-linked oxidoreductase asqF to yield conjugated aryl diene. The delta(3') double bond then serves as the site of the second alkylation with DMAPP catalyzed by the prenyltransferase asqH2 to yield a carbenium ion intermediate, which can be attacked by H(2)O to yield a styrenyl quinolone containing a C3'-hydroxyprenyl chain. The FAD-dependent monooxygenase asqG performs epoxidation of the terminal C7'-C8' olefin. Finally, after dehydratation of the epoxide at C3 by asqC, the quinolone epoxide rearrangement protein asqO catalyzes an enzymatic 3-exo-tet cyclization to yield the cyclopropyl-THF ring system in aspoquinolone (Probable).</text>
</comment>
<comment type="pathway">
    <text evidence="5">Secondary metabolite biosynthesis.</text>
</comment>
<comment type="pathway">
    <text evidence="5">Alkaloid biosynthesis.</text>
</comment>
<comment type="pathway">
    <text evidence="5">Mycotoxin biosynthesis.</text>
</comment>
<comment type="similarity">
    <text evidence="4">Belongs to the class I-like SAM-binding methyltransferase superfamily. Cation-independent O-methyltransferase family.</text>
</comment>
<gene>
    <name evidence="3" type="primary">asqN</name>
    <name type="ORF">AN9223</name>
</gene>
<proteinExistence type="inferred from homology"/>
<protein>
    <recommendedName>
        <fullName evidence="3">O-methyltransferase asqN</fullName>
        <ecNumber evidence="1">2.1.1.-</ecNumber>
    </recommendedName>
    <alternativeName>
        <fullName evidence="4">4'-methoxyviridicatin/aspoquinolone biosynthesis cluster protein asqN</fullName>
    </alternativeName>
    <alternativeName>
        <fullName evidence="3">Aspoquinolone biosynthesis protein N</fullName>
    </alternativeName>
</protein>
<feature type="chain" id="PRO_0000437610" description="O-methyltransferase asqN">
    <location>
        <begin position="1"/>
        <end position="289"/>
    </location>
</feature>
<feature type="active site" description="Proton acceptor" evidence="1">
    <location>
        <position position="195"/>
    </location>
</feature>
<feature type="binding site" evidence="1">
    <location>
        <position position="155"/>
    </location>
    <ligand>
        <name>S-adenosyl-L-methionine</name>
        <dbReference type="ChEBI" id="CHEBI:59789"/>
    </ligand>
</feature>
<sequence>MRVLVNKHVFMQPQPGHYAHTRMSMLLLKPKTKDLLSHRLDDVFRSASREADALAAARYREPERGAPTGFNLAFNTDKNFWEYITNDDPQRGERFARAMHAVNINSLDVIPRLYPFDSLVVDGGLIVDVGGGQGQVAKRILEYFPSSGLRCIVQDRYVVNASSPGPAVVEMQQHDFFEAQPVKGAAAYFFRHIFHDWPDKACAAILKQTARAMDKDRSRILICDQVLQDDVPAEASLLYDIDMMSLFGGKERSLAEWKYLIASAEESLHIVNVIFSTESEAAILDVRIK</sequence>